<accession>Q2A5I2</accession>
<evidence type="ECO:0000255" key="1">
    <source>
        <dbReference type="HAMAP-Rule" id="MF_00291"/>
    </source>
</evidence>
<evidence type="ECO:0000305" key="2"/>
<sequence length="239" mass="26422">MSLMKEMLSAGVHFGHKKAFWNPQMKEYIFGINHGVHIINLEKTVPLFQDAVNFVGKTVANGGKILFVGTKRQAQDIVEAEAKRCGMPFVSHRWLGGMLTNYKTVRQSIKRLAQLEKMREDGTLESLTKKEMLQNIRTIEKLEKVLGGIKEMGGLPDAIVVIDGNKEHIAIQEAQKLGIKVVAIVDTNSNPEGIDYIIPGNDDAVKSISFYMKKFADAVIDAQGLDRAVEAKADEAAQA</sequence>
<protein>
    <recommendedName>
        <fullName evidence="1">Small ribosomal subunit protein uS2</fullName>
    </recommendedName>
    <alternativeName>
        <fullName evidence="2">30S ribosomal protein S2</fullName>
    </alternativeName>
</protein>
<feature type="chain" id="PRO_1000003962" description="Small ribosomal subunit protein uS2">
    <location>
        <begin position="1"/>
        <end position="239"/>
    </location>
</feature>
<dbReference type="EMBL" id="AM233362">
    <property type="protein sequence ID" value="CAJ78665.1"/>
    <property type="molecule type" value="Genomic_DNA"/>
</dbReference>
<dbReference type="RefSeq" id="WP_003014289.1">
    <property type="nucleotide sequence ID" value="NZ_CP009694.1"/>
</dbReference>
<dbReference type="SMR" id="Q2A5I2"/>
<dbReference type="KEGG" id="ftl:FTL_0224"/>
<dbReference type="Proteomes" id="UP000001944">
    <property type="component" value="Chromosome"/>
</dbReference>
<dbReference type="GO" id="GO:0022627">
    <property type="term" value="C:cytosolic small ribosomal subunit"/>
    <property type="evidence" value="ECO:0007669"/>
    <property type="project" value="TreeGrafter"/>
</dbReference>
<dbReference type="GO" id="GO:0003735">
    <property type="term" value="F:structural constituent of ribosome"/>
    <property type="evidence" value="ECO:0007669"/>
    <property type="project" value="InterPro"/>
</dbReference>
<dbReference type="GO" id="GO:0006412">
    <property type="term" value="P:translation"/>
    <property type="evidence" value="ECO:0007669"/>
    <property type="project" value="UniProtKB-UniRule"/>
</dbReference>
<dbReference type="CDD" id="cd01425">
    <property type="entry name" value="RPS2"/>
    <property type="match status" value="1"/>
</dbReference>
<dbReference type="FunFam" id="1.10.287.610:FF:000001">
    <property type="entry name" value="30S ribosomal protein S2"/>
    <property type="match status" value="1"/>
</dbReference>
<dbReference type="Gene3D" id="3.40.50.10490">
    <property type="entry name" value="Glucose-6-phosphate isomerase like protein, domain 1"/>
    <property type="match status" value="1"/>
</dbReference>
<dbReference type="Gene3D" id="1.10.287.610">
    <property type="entry name" value="Helix hairpin bin"/>
    <property type="match status" value="1"/>
</dbReference>
<dbReference type="HAMAP" id="MF_00291_B">
    <property type="entry name" value="Ribosomal_uS2_B"/>
    <property type="match status" value="1"/>
</dbReference>
<dbReference type="InterPro" id="IPR001865">
    <property type="entry name" value="Ribosomal_uS2"/>
</dbReference>
<dbReference type="InterPro" id="IPR005706">
    <property type="entry name" value="Ribosomal_uS2_bac/mit/plastid"/>
</dbReference>
<dbReference type="InterPro" id="IPR018130">
    <property type="entry name" value="Ribosomal_uS2_CS"/>
</dbReference>
<dbReference type="InterPro" id="IPR023591">
    <property type="entry name" value="Ribosomal_uS2_flav_dom_sf"/>
</dbReference>
<dbReference type="NCBIfam" id="TIGR01011">
    <property type="entry name" value="rpsB_bact"/>
    <property type="match status" value="1"/>
</dbReference>
<dbReference type="PANTHER" id="PTHR12534">
    <property type="entry name" value="30S RIBOSOMAL PROTEIN S2 PROKARYOTIC AND ORGANELLAR"/>
    <property type="match status" value="1"/>
</dbReference>
<dbReference type="PANTHER" id="PTHR12534:SF0">
    <property type="entry name" value="SMALL RIBOSOMAL SUBUNIT PROTEIN US2M"/>
    <property type="match status" value="1"/>
</dbReference>
<dbReference type="Pfam" id="PF00318">
    <property type="entry name" value="Ribosomal_S2"/>
    <property type="match status" value="1"/>
</dbReference>
<dbReference type="PRINTS" id="PR00395">
    <property type="entry name" value="RIBOSOMALS2"/>
</dbReference>
<dbReference type="SUPFAM" id="SSF52313">
    <property type="entry name" value="Ribosomal protein S2"/>
    <property type="match status" value="1"/>
</dbReference>
<dbReference type="PROSITE" id="PS00962">
    <property type="entry name" value="RIBOSOMAL_S2_1"/>
    <property type="match status" value="1"/>
</dbReference>
<reference key="1">
    <citation type="submission" date="2006-03" db="EMBL/GenBank/DDBJ databases">
        <title>Complete genome sequence of Francisella tularensis LVS (Live Vaccine Strain).</title>
        <authorList>
            <person name="Chain P."/>
            <person name="Larimer F."/>
            <person name="Land M."/>
            <person name="Stilwagen S."/>
            <person name="Larsson P."/>
            <person name="Bearden S."/>
            <person name="Chu M."/>
            <person name="Oyston P."/>
            <person name="Forsman M."/>
            <person name="Andersson S."/>
            <person name="Lindler L."/>
            <person name="Titball R."/>
            <person name="Garcia E."/>
        </authorList>
    </citation>
    <scope>NUCLEOTIDE SEQUENCE [LARGE SCALE GENOMIC DNA]</scope>
    <source>
        <strain>LVS</strain>
    </source>
</reference>
<comment type="similarity">
    <text evidence="1">Belongs to the universal ribosomal protein uS2 family.</text>
</comment>
<organism>
    <name type="scientific">Francisella tularensis subsp. holarctica (strain LVS)</name>
    <dbReference type="NCBI Taxonomy" id="376619"/>
    <lineage>
        <taxon>Bacteria</taxon>
        <taxon>Pseudomonadati</taxon>
        <taxon>Pseudomonadota</taxon>
        <taxon>Gammaproteobacteria</taxon>
        <taxon>Thiotrichales</taxon>
        <taxon>Francisellaceae</taxon>
        <taxon>Francisella</taxon>
    </lineage>
</organism>
<gene>
    <name evidence="1" type="primary">rpsB</name>
    <name type="ordered locus">FTL_0224</name>
</gene>
<keyword id="KW-1185">Reference proteome</keyword>
<keyword id="KW-0687">Ribonucleoprotein</keyword>
<keyword id="KW-0689">Ribosomal protein</keyword>
<proteinExistence type="inferred from homology"/>
<name>RS2_FRATH</name>